<name>CYPX_USEUD</name>
<organism>
    <name type="scientific">Unspecified eudicot DB-1992</name>
    <dbReference type="NCBI Taxonomy" id="323200"/>
    <lineage>
        <taxon>Eukaryota</taxon>
        <taxon>Viridiplantae</taxon>
        <taxon>Streptophyta</taxon>
        <taxon>Embryophyta</taxon>
        <taxon>Tracheophyta</taxon>
        <taxon>Spermatophyta</taxon>
        <taxon>Magnoliopsida</taxon>
        <taxon>eudicotyledons</taxon>
    </lineage>
</organism>
<comment type="function">
    <text>PPIases accelerate the folding of proteins. It catalyzes the cis-trans isomerization of proline imidic peptide bonds in oligopeptides.</text>
</comment>
<comment type="catalytic activity">
    <reaction>
        <text>[protein]-peptidylproline (omega=180) = [protein]-peptidylproline (omega=0)</text>
        <dbReference type="Rhea" id="RHEA:16237"/>
        <dbReference type="Rhea" id="RHEA-COMP:10747"/>
        <dbReference type="Rhea" id="RHEA-COMP:10748"/>
        <dbReference type="ChEBI" id="CHEBI:83833"/>
        <dbReference type="ChEBI" id="CHEBI:83834"/>
        <dbReference type="EC" id="5.2.1.8"/>
    </reaction>
</comment>
<comment type="activity regulation">
    <text>Binds cyclosporin A (CsA). CsA mediates some of its effects via an inhibitory action on PPIase.</text>
</comment>
<comment type="subcellular location">
    <subcellularLocation>
        <location evidence="2">Cytoplasm</location>
    </subcellularLocation>
</comment>
<comment type="similarity">
    <text evidence="2">Belongs to the cyclophilin-type PPIase family.</text>
</comment>
<comment type="caution">
    <text evidence="3">Was originally (PubMed:1623198) reported to be isolated from an A.thaliana cDNA library. PubMed:9426607 authors have assigned that the sequence has been amplified from an other contaminating organism.</text>
</comment>
<dbReference type="EC" id="5.2.1.8"/>
<dbReference type="EMBL" id="X63616">
    <property type="protein sequence ID" value="CAA45161.1"/>
    <property type="molecule type" value="mRNA"/>
</dbReference>
<dbReference type="PIR" id="S22496">
    <property type="entry name" value="S22496"/>
</dbReference>
<dbReference type="SMR" id="P35627"/>
<dbReference type="GO" id="GO:0005737">
    <property type="term" value="C:cytoplasm"/>
    <property type="evidence" value="ECO:0007669"/>
    <property type="project" value="UniProtKB-SubCell"/>
</dbReference>
<dbReference type="GO" id="GO:0016018">
    <property type="term" value="F:cyclosporin A binding"/>
    <property type="evidence" value="ECO:0007669"/>
    <property type="project" value="TreeGrafter"/>
</dbReference>
<dbReference type="GO" id="GO:0003755">
    <property type="term" value="F:peptidyl-prolyl cis-trans isomerase activity"/>
    <property type="evidence" value="ECO:0007669"/>
    <property type="project" value="UniProtKB-KW"/>
</dbReference>
<dbReference type="GO" id="GO:0006457">
    <property type="term" value="P:protein folding"/>
    <property type="evidence" value="ECO:0007669"/>
    <property type="project" value="InterPro"/>
</dbReference>
<dbReference type="CDD" id="cd01926">
    <property type="entry name" value="cyclophilin_ABH_like"/>
    <property type="match status" value="1"/>
</dbReference>
<dbReference type="FunFam" id="2.40.100.10:FF:000022">
    <property type="entry name" value="Peptidyl-prolyl cis-trans isomerase CYP95"/>
    <property type="match status" value="1"/>
</dbReference>
<dbReference type="Gene3D" id="2.40.100.10">
    <property type="entry name" value="Cyclophilin-like"/>
    <property type="match status" value="1"/>
</dbReference>
<dbReference type="InterPro" id="IPR029000">
    <property type="entry name" value="Cyclophilin-like_dom_sf"/>
</dbReference>
<dbReference type="InterPro" id="IPR024936">
    <property type="entry name" value="Cyclophilin-type_PPIase"/>
</dbReference>
<dbReference type="InterPro" id="IPR020892">
    <property type="entry name" value="Cyclophilin-type_PPIase_CS"/>
</dbReference>
<dbReference type="InterPro" id="IPR002130">
    <property type="entry name" value="Cyclophilin-type_PPIase_dom"/>
</dbReference>
<dbReference type="PANTHER" id="PTHR11071">
    <property type="entry name" value="PEPTIDYL-PROLYL CIS-TRANS ISOMERASE"/>
    <property type="match status" value="1"/>
</dbReference>
<dbReference type="PANTHER" id="PTHR11071:SF561">
    <property type="entry name" value="PEPTIDYL-PROLYL CIS-TRANS ISOMERASE D-RELATED"/>
    <property type="match status" value="1"/>
</dbReference>
<dbReference type="Pfam" id="PF00160">
    <property type="entry name" value="Pro_isomerase"/>
    <property type="match status" value="1"/>
</dbReference>
<dbReference type="PIRSF" id="PIRSF001467">
    <property type="entry name" value="Peptidylpro_ismrse"/>
    <property type="match status" value="1"/>
</dbReference>
<dbReference type="PRINTS" id="PR00153">
    <property type="entry name" value="CSAPPISMRASE"/>
</dbReference>
<dbReference type="SUPFAM" id="SSF50891">
    <property type="entry name" value="Cyclophilin-like"/>
    <property type="match status" value="1"/>
</dbReference>
<dbReference type="PROSITE" id="PS00170">
    <property type="entry name" value="CSA_PPIASE_1"/>
    <property type="match status" value="1"/>
</dbReference>
<dbReference type="PROSITE" id="PS50072">
    <property type="entry name" value="CSA_PPIASE_2"/>
    <property type="match status" value="1"/>
</dbReference>
<proteinExistence type="evidence at transcript level"/>
<reference key="1">
    <citation type="journal article" date="1992" name="Plant Mol. Biol.">
        <title>Nucleotide sequence of a cDNA encoding an Arabidopsis cyclophilin-like protein.</title>
        <authorList>
            <person name="Bartling D."/>
            <person name="Heese A."/>
            <person name="Weiler E.W."/>
        </authorList>
    </citation>
    <scope>NUCLEOTIDE SEQUENCE [MRNA]</scope>
    <source>
        <tissue>Leaf</tissue>
    </source>
</reference>
<reference key="2">
    <citation type="journal article" date="1997" name="Plant Mol. Biol.">
        <title>Characterization of the cyclophilin gene family of Arabidopsis thaliana and phylogenetic analysis of known cyclophilin proteins.</title>
        <authorList>
            <person name="Chou I.T."/>
            <person name="Gasser C.S."/>
        </authorList>
    </citation>
    <scope>DISCUSSION OF ORIGIN OF SEQUENCE</scope>
</reference>
<keyword id="KW-0963">Cytoplasm</keyword>
<keyword id="KW-0413">Isomerase</keyword>
<keyword id="KW-0697">Rotamase</keyword>
<feature type="chain" id="PRO_0000064139" description="Peptidyl-prolyl cis-trans isomerase">
    <location>
        <begin position="1"/>
        <end position="169"/>
    </location>
</feature>
<feature type="domain" description="PPIase cyclophilin-type" evidence="1">
    <location>
        <begin position="5"/>
        <end position="168"/>
    </location>
</feature>
<evidence type="ECO:0000255" key="1">
    <source>
        <dbReference type="PROSITE-ProRule" id="PRU00156"/>
    </source>
</evidence>
<evidence type="ECO:0000305" key="2"/>
<evidence type="ECO:0000305" key="3">
    <source>
    </source>
</evidence>
<sequence>MAHCFFDMTIGGQPAGRIIMELFPDVPKTAENFRALCTGEKGIGPSGKKMTYEGSVFHRVIPKFMLQGGDFTLGNGRGGESIYGAKFADENFIHKHTTPGLLSMANAGPGTNGSQFFITTVATPHLDGKHVVFGKVVEGMDVVRKIEATQTDRGDKPLSEVKIAKCGQL</sequence>
<protein>
    <recommendedName>
        <fullName>Peptidyl-prolyl cis-trans isomerase</fullName>
        <shortName>PPIase</shortName>
        <ecNumber>5.2.1.8</ecNumber>
    </recommendedName>
    <alternativeName>
        <fullName>Cyclophilin</fullName>
    </alternativeName>
    <alternativeName>
        <fullName>Cyclosporin A-binding protein</fullName>
    </alternativeName>
    <alternativeName>
        <fullName>Rotamase</fullName>
    </alternativeName>
</protein>
<accession>P35627</accession>